<keyword id="KW-0342">GTP-binding</keyword>
<keyword id="KW-0496">Mitochondrion</keyword>
<keyword id="KW-0547">Nucleotide-binding</keyword>
<keyword id="KW-0648">Protein biosynthesis</keyword>
<keyword id="KW-1185">Reference proteome</keyword>
<keyword id="KW-0809">Transit peptide</keyword>
<feature type="transit peptide" description="Mitochondrion" evidence="1">
    <location>
        <begin position="1"/>
        <end position="55"/>
    </location>
</feature>
<feature type="chain" id="PRO_0000385615" description="Ribosome-releasing factor 2, mitochondrial">
    <location>
        <begin position="56"/>
        <end position="921"/>
    </location>
</feature>
<feature type="domain" description="tr-type G">
    <location>
        <begin position="60"/>
        <end position="368"/>
    </location>
</feature>
<feature type="binding site" evidence="1">
    <location>
        <begin position="69"/>
        <end position="76"/>
    </location>
    <ligand>
        <name>GTP</name>
        <dbReference type="ChEBI" id="CHEBI:37565"/>
    </ligand>
</feature>
<feature type="binding site" evidence="1">
    <location>
        <begin position="152"/>
        <end position="156"/>
    </location>
    <ligand>
        <name>GTP</name>
        <dbReference type="ChEBI" id="CHEBI:37565"/>
    </ligand>
</feature>
<feature type="binding site" evidence="1">
    <location>
        <begin position="206"/>
        <end position="209"/>
    </location>
    <ligand>
        <name>GTP</name>
        <dbReference type="ChEBI" id="CHEBI:37565"/>
    </ligand>
</feature>
<comment type="function">
    <text evidence="1">Mitochondrial GTPase that mediates the disassembly of ribosomes from messenger RNA at the termination of mitochondrial protein biosynthesis. Not involved in the GTP-dependent ribosomal translocation step during translation elongation.</text>
</comment>
<comment type="subcellular location">
    <subcellularLocation>
        <location evidence="1">Mitochondrion</location>
    </subcellularLocation>
</comment>
<comment type="similarity">
    <text evidence="1">Belongs to the TRAFAC class translation factor GTPase superfamily. Classic translation factor GTPase family. EF-G/EF-2 subfamily.</text>
</comment>
<protein>
    <recommendedName>
        <fullName evidence="1">Ribosome-releasing factor 2, mitochondrial</fullName>
        <shortName evidence="1">RRF2mt</shortName>
    </recommendedName>
    <alternativeName>
        <fullName evidence="1">Elongation factor G 2, mitochondrial</fullName>
        <shortName evidence="1">EF-G2mt</shortName>
        <shortName evidence="1">mEF-G 2</shortName>
    </alternativeName>
</protein>
<sequence length="921" mass="99308">MVSALLLRARQNGRAARCLDYPKVKCWALASLPKSSLEKPGFSQVRRFSVFHPQSQVNLDLTRNIGIIAHIDAGKTTTTERMLYYSGLTRRIGDVDEGSTVTDFLPAERARGITIQSAAITFHWPPAECGNATRQDPRSPRSASSHMVNLIDTPGHADFTFEVLRSLRILDGAVCILDGVAGVEAQTEQVWHQASTYNIPRIVYVNKMDRDGAAFGRTVREVASRLGGWPAVCQIPWFEGGDGRFVGVADAINLQGLLWSGGDGKSVKRFSLSELDEAESQLAQELRRARVALVELLSEHDEIIVEKFFENEEDHLSVSPADILDSLRRCLLEGNGRKIIPIFAGASFRNIGVQPLLDSVVDLLPSPQETPDPEVAIGGVKGSLRRLLSGDLLVEQKEKAAPKGKQKKKAAVVADSRNAIKQLHGCGLAFKVVNDAKRGVLVYVRVYSGSLDRGSLLYNTNLNVSERAPRLLKMYANDAVEVDSISEGQIGVVVGLKHARTGDTLVACTTNKATPPEPLDTLQLRPIDVPPPVFFASVEPHSLAEEKRMHESLALLLREDPSLHVSIDEDSGQTLLSGMGELHLEIARDRLINDLKAKATMGPIEIGYRECPLGASGPVTKIFDREIAGRKGKAGCTAEIEPFDPETSPAPDPAALSVEIANGNQIVILAPELQIETNKKGLEESPILPPGLDVDAVRSALSNGCLAALARGPQFTFPMHSTRVTLTLSPTAHIFGNETTSASLSAATRLATSTALSNLISNPASASATPGTCLMEPLMNVIISVDEASLGAVVHDISSSRGGHIVSLDEDVPIASTDLSIPNTETPDPELDLPPIDPAKVYAPPDPFQSSTVVGGSMASDARNRPRTITAKVPLKEMVGYLKHLRSLSAGRGTFVMSVDRFEKMSPPRQKAVLTELRGVY</sequence>
<name>RRF2M_EMENI</name>
<organism>
    <name type="scientific">Emericella nidulans (strain FGSC A4 / ATCC 38163 / CBS 112.46 / NRRL 194 / M139)</name>
    <name type="common">Aspergillus nidulans</name>
    <dbReference type="NCBI Taxonomy" id="227321"/>
    <lineage>
        <taxon>Eukaryota</taxon>
        <taxon>Fungi</taxon>
        <taxon>Dikarya</taxon>
        <taxon>Ascomycota</taxon>
        <taxon>Pezizomycotina</taxon>
        <taxon>Eurotiomycetes</taxon>
        <taxon>Eurotiomycetidae</taxon>
        <taxon>Eurotiales</taxon>
        <taxon>Aspergillaceae</taxon>
        <taxon>Aspergillus</taxon>
        <taxon>Aspergillus subgen. Nidulantes</taxon>
    </lineage>
</organism>
<accession>Q5BB57</accession>
<accession>C8VML5</accession>
<gene>
    <name type="primary">mef2</name>
    <name type="ORF">AN2223</name>
</gene>
<reference key="1">
    <citation type="journal article" date="2005" name="Nature">
        <title>Sequencing of Aspergillus nidulans and comparative analysis with A. fumigatus and A. oryzae.</title>
        <authorList>
            <person name="Galagan J.E."/>
            <person name="Calvo S.E."/>
            <person name="Cuomo C."/>
            <person name="Ma L.-J."/>
            <person name="Wortman J.R."/>
            <person name="Batzoglou S."/>
            <person name="Lee S.-I."/>
            <person name="Bastuerkmen M."/>
            <person name="Spevak C.C."/>
            <person name="Clutterbuck J."/>
            <person name="Kapitonov V."/>
            <person name="Jurka J."/>
            <person name="Scazzocchio C."/>
            <person name="Farman M.L."/>
            <person name="Butler J."/>
            <person name="Purcell S."/>
            <person name="Harris S."/>
            <person name="Braus G.H."/>
            <person name="Draht O."/>
            <person name="Busch S."/>
            <person name="D'Enfert C."/>
            <person name="Bouchier C."/>
            <person name="Goldman G.H."/>
            <person name="Bell-Pedersen D."/>
            <person name="Griffiths-Jones S."/>
            <person name="Doonan J.H."/>
            <person name="Yu J."/>
            <person name="Vienken K."/>
            <person name="Pain A."/>
            <person name="Freitag M."/>
            <person name="Selker E.U."/>
            <person name="Archer D.B."/>
            <person name="Penalva M.A."/>
            <person name="Oakley B.R."/>
            <person name="Momany M."/>
            <person name="Tanaka T."/>
            <person name="Kumagai T."/>
            <person name="Asai K."/>
            <person name="Machida M."/>
            <person name="Nierman W.C."/>
            <person name="Denning D.W."/>
            <person name="Caddick M.X."/>
            <person name="Hynes M."/>
            <person name="Paoletti M."/>
            <person name="Fischer R."/>
            <person name="Miller B.L."/>
            <person name="Dyer P.S."/>
            <person name="Sachs M.S."/>
            <person name="Osmani S.A."/>
            <person name="Birren B.W."/>
        </authorList>
    </citation>
    <scope>NUCLEOTIDE SEQUENCE [LARGE SCALE GENOMIC DNA]</scope>
    <source>
        <strain>FGSC A4 / ATCC 38163 / CBS 112.46 / NRRL 194 / M139</strain>
    </source>
</reference>
<reference key="2">
    <citation type="journal article" date="2009" name="Fungal Genet. Biol.">
        <title>The 2008 update of the Aspergillus nidulans genome annotation: a community effort.</title>
        <authorList>
            <person name="Wortman J.R."/>
            <person name="Gilsenan J.M."/>
            <person name="Joardar V."/>
            <person name="Deegan J."/>
            <person name="Clutterbuck J."/>
            <person name="Andersen M.R."/>
            <person name="Archer D."/>
            <person name="Bencina M."/>
            <person name="Braus G."/>
            <person name="Coutinho P."/>
            <person name="von Dohren H."/>
            <person name="Doonan J."/>
            <person name="Driessen A.J."/>
            <person name="Durek P."/>
            <person name="Espeso E."/>
            <person name="Fekete E."/>
            <person name="Flipphi M."/>
            <person name="Estrada C.G."/>
            <person name="Geysens S."/>
            <person name="Goldman G."/>
            <person name="de Groot P.W."/>
            <person name="Hansen K."/>
            <person name="Harris S.D."/>
            <person name="Heinekamp T."/>
            <person name="Helmstaedt K."/>
            <person name="Henrissat B."/>
            <person name="Hofmann G."/>
            <person name="Homan T."/>
            <person name="Horio T."/>
            <person name="Horiuchi H."/>
            <person name="James S."/>
            <person name="Jones M."/>
            <person name="Karaffa L."/>
            <person name="Karanyi Z."/>
            <person name="Kato M."/>
            <person name="Keller N."/>
            <person name="Kelly D.E."/>
            <person name="Kiel J.A."/>
            <person name="Kim J.M."/>
            <person name="van der Klei I.J."/>
            <person name="Klis F.M."/>
            <person name="Kovalchuk A."/>
            <person name="Krasevec N."/>
            <person name="Kubicek C.P."/>
            <person name="Liu B."/>
            <person name="Maccabe A."/>
            <person name="Meyer V."/>
            <person name="Mirabito P."/>
            <person name="Miskei M."/>
            <person name="Mos M."/>
            <person name="Mullins J."/>
            <person name="Nelson D.R."/>
            <person name="Nielsen J."/>
            <person name="Oakley B.R."/>
            <person name="Osmani S.A."/>
            <person name="Pakula T."/>
            <person name="Paszewski A."/>
            <person name="Paulsen I."/>
            <person name="Pilsyk S."/>
            <person name="Pocsi I."/>
            <person name="Punt P.J."/>
            <person name="Ram A.F."/>
            <person name="Ren Q."/>
            <person name="Robellet X."/>
            <person name="Robson G."/>
            <person name="Seiboth B."/>
            <person name="van Solingen P."/>
            <person name="Specht T."/>
            <person name="Sun J."/>
            <person name="Taheri-Talesh N."/>
            <person name="Takeshita N."/>
            <person name="Ussery D."/>
            <person name="vanKuyk P.A."/>
            <person name="Visser H."/>
            <person name="van de Vondervoort P.J."/>
            <person name="de Vries R.P."/>
            <person name="Walton J."/>
            <person name="Xiang X."/>
            <person name="Xiong Y."/>
            <person name="Zeng A.P."/>
            <person name="Brandt B.W."/>
            <person name="Cornell M.J."/>
            <person name="van den Hondel C.A."/>
            <person name="Visser J."/>
            <person name="Oliver S.G."/>
            <person name="Turner G."/>
        </authorList>
    </citation>
    <scope>GENOME REANNOTATION</scope>
    <source>
        <strain>FGSC A4 / ATCC 38163 / CBS 112.46 / NRRL 194 / M139</strain>
    </source>
</reference>
<evidence type="ECO:0000255" key="1">
    <source>
        <dbReference type="HAMAP-Rule" id="MF_03059"/>
    </source>
</evidence>
<dbReference type="EMBL" id="AACD01000036">
    <property type="protein sequence ID" value="EAA63908.1"/>
    <property type="molecule type" value="Genomic_DNA"/>
</dbReference>
<dbReference type="EMBL" id="BN001307">
    <property type="protein sequence ID" value="CBF86415.1"/>
    <property type="molecule type" value="Genomic_DNA"/>
</dbReference>
<dbReference type="RefSeq" id="XP_659827.1">
    <property type="nucleotide sequence ID" value="XM_654735.1"/>
</dbReference>
<dbReference type="SMR" id="Q5BB57"/>
<dbReference type="FunCoup" id="Q5BB57">
    <property type="interactions" value="585"/>
</dbReference>
<dbReference type="STRING" id="227321.Q5BB57"/>
<dbReference type="EnsemblFungi" id="CBF86415">
    <property type="protein sequence ID" value="CBF86415"/>
    <property type="gene ID" value="ANIA_02223"/>
</dbReference>
<dbReference type="KEGG" id="ani:ANIA_02223"/>
<dbReference type="eggNOG" id="KOG0465">
    <property type="taxonomic scope" value="Eukaryota"/>
</dbReference>
<dbReference type="HOGENOM" id="CLU_002794_4_1_1"/>
<dbReference type="InParanoid" id="Q5BB57"/>
<dbReference type="OMA" id="GPQFTFP"/>
<dbReference type="OrthoDB" id="198619at2759"/>
<dbReference type="Proteomes" id="UP000000560">
    <property type="component" value="Chromosome VII"/>
</dbReference>
<dbReference type="GO" id="GO:0005739">
    <property type="term" value="C:mitochondrion"/>
    <property type="evidence" value="ECO:0007669"/>
    <property type="project" value="UniProtKB-SubCell"/>
</dbReference>
<dbReference type="GO" id="GO:0005525">
    <property type="term" value="F:GTP binding"/>
    <property type="evidence" value="ECO:0007669"/>
    <property type="project" value="UniProtKB-UniRule"/>
</dbReference>
<dbReference type="GO" id="GO:0003924">
    <property type="term" value="F:GTPase activity"/>
    <property type="evidence" value="ECO:0000318"/>
    <property type="project" value="GO_Central"/>
</dbReference>
<dbReference type="GO" id="GO:0000002">
    <property type="term" value="P:mitochondrial genome maintenance"/>
    <property type="evidence" value="ECO:0007669"/>
    <property type="project" value="EnsemblFungi"/>
</dbReference>
<dbReference type="GO" id="GO:0032543">
    <property type="term" value="P:mitochondrial translation"/>
    <property type="evidence" value="ECO:0000318"/>
    <property type="project" value="GO_Central"/>
</dbReference>
<dbReference type="GO" id="GO:0051881">
    <property type="term" value="P:regulation of mitochondrial membrane potential"/>
    <property type="evidence" value="ECO:0007669"/>
    <property type="project" value="EnsemblFungi"/>
</dbReference>
<dbReference type="GO" id="GO:0032790">
    <property type="term" value="P:ribosome disassembly"/>
    <property type="evidence" value="ECO:0000318"/>
    <property type="project" value="GO_Central"/>
</dbReference>
<dbReference type="CDD" id="cd01886">
    <property type="entry name" value="EF-G"/>
    <property type="match status" value="1"/>
</dbReference>
<dbReference type="CDD" id="cd16262">
    <property type="entry name" value="EFG_III"/>
    <property type="match status" value="1"/>
</dbReference>
<dbReference type="CDD" id="cd03713">
    <property type="entry name" value="EFG_mtEFG_C"/>
    <property type="match status" value="1"/>
</dbReference>
<dbReference type="CDD" id="cd04092">
    <property type="entry name" value="mtEFG2_II_like"/>
    <property type="match status" value="1"/>
</dbReference>
<dbReference type="FunFam" id="2.40.30.10:FF:000106">
    <property type="entry name" value="Ribosome-releasing factor 2, mitochondrial"/>
    <property type="match status" value="1"/>
</dbReference>
<dbReference type="FunFam" id="3.30.70.870:FF:000007">
    <property type="entry name" value="Ribosome-releasing factor 2, mitochondrial"/>
    <property type="match status" value="1"/>
</dbReference>
<dbReference type="FunFam" id="3.40.50.300:FF:001636">
    <property type="entry name" value="Ribosome-releasing factor 2, mitochondrial"/>
    <property type="match status" value="1"/>
</dbReference>
<dbReference type="Gene3D" id="3.30.70.240">
    <property type="match status" value="1"/>
</dbReference>
<dbReference type="Gene3D" id="3.30.70.870">
    <property type="entry name" value="Elongation Factor G (Translational Gtpase), domain 3"/>
    <property type="match status" value="1"/>
</dbReference>
<dbReference type="Gene3D" id="3.40.50.300">
    <property type="entry name" value="P-loop containing nucleotide triphosphate hydrolases"/>
    <property type="match status" value="1"/>
</dbReference>
<dbReference type="Gene3D" id="2.40.30.10">
    <property type="entry name" value="Translation factors"/>
    <property type="match status" value="1"/>
</dbReference>
<dbReference type="HAMAP" id="MF_03059">
    <property type="entry name" value="mEF_G_2"/>
    <property type="match status" value="1"/>
</dbReference>
<dbReference type="InterPro" id="IPR053905">
    <property type="entry name" value="EF-G-like_DII"/>
</dbReference>
<dbReference type="InterPro" id="IPR030851">
    <property type="entry name" value="EFG2"/>
</dbReference>
<dbReference type="InterPro" id="IPR041095">
    <property type="entry name" value="EFG_II"/>
</dbReference>
<dbReference type="InterPro" id="IPR009022">
    <property type="entry name" value="EFG_III"/>
</dbReference>
<dbReference type="InterPro" id="IPR035647">
    <property type="entry name" value="EFG_III/V"/>
</dbReference>
<dbReference type="InterPro" id="IPR035649">
    <property type="entry name" value="EFG_V"/>
</dbReference>
<dbReference type="InterPro" id="IPR000640">
    <property type="entry name" value="EFG_V-like"/>
</dbReference>
<dbReference type="InterPro" id="IPR031157">
    <property type="entry name" value="G_TR_CS"/>
</dbReference>
<dbReference type="InterPro" id="IPR027417">
    <property type="entry name" value="P-loop_NTPase"/>
</dbReference>
<dbReference type="InterPro" id="IPR020568">
    <property type="entry name" value="Ribosomal_Su5_D2-typ_SF"/>
</dbReference>
<dbReference type="InterPro" id="IPR005225">
    <property type="entry name" value="Small_GTP-bd"/>
</dbReference>
<dbReference type="InterPro" id="IPR000795">
    <property type="entry name" value="T_Tr_GTP-bd_dom"/>
</dbReference>
<dbReference type="InterPro" id="IPR009000">
    <property type="entry name" value="Transl_B-barrel_sf"/>
</dbReference>
<dbReference type="NCBIfam" id="TIGR00231">
    <property type="entry name" value="small_GTP"/>
    <property type="match status" value="1"/>
</dbReference>
<dbReference type="PANTHER" id="PTHR43261:SF1">
    <property type="entry name" value="RIBOSOME-RELEASING FACTOR 2, MITOCHONDRIAL"/>
    <property type="match status" value="1"/>
</dbReference>
<dbReference type="PANTHER" id="PTHR43261">
    <property type="entry name" value="TRANSLATION ELONGATION FACTOR G-RELATED"/>
    <property type="match status" value="1"/>
</dbReference>
<dbReference type="Pfam" id="PF22042">
    <property type="entry name" value="EF-G_D2"/>
    <property type="match status" value="1"/>
</dbReference>
<dbReference type="Pfam" id="PF00679">
    <property type="entry name" value="EFG_C"/>
    <property type="match status" value="1"/>
</dbReference>
<dbReference type="Pfam" id="PF14492">
    <property type="entry name" value="EFG_III"/>
    <property type="match status" value="1"/>
</dbReference>
<dbReference type="Pfam" id="PF00009">
    <property type="entry name" value="GTP_EFTU"/>
    <property type="match status" value="1"/>
</dbReference>
<dbReference type="PRINTS" id="PR00315">
    <property type="entry name" value="ELONGATNFCT"/>
</dbReference>
<dbReference type="SMART" id="SM00838">
    <property type="entry name" value="EFG_C"/>
    <property type="match status" value="1"/>
</dbReference>
<dbReference type="SUPFAM" id="SSF54980">
    <property type="entry name" value="EF-G C-terminal domain-like"/>
    <property type="match status" value="2"/>
</dbReference>
<dbReference type="SUPFAM" id="SSF52540">
    <property type="entry name" value="P-loop containing nucleoside triphosphate hydrolases"/>
    <property type="match status" value="1"/>
</dbReference>
<dbReference type="SUPFAM" id="SSF54211">
    <property type="entry name" value="Ribosomal protein S5 domain 2-like"/>
    <property type="match status" value="1"/>
</dbReference>
<dbReference type="SUPFAM" id="SSF50447">
    <property type="entry name" value="Translation proteins"/>
    <property type="match status" value="1"/>
</dbReference>
<dbReference type="PROSITE" id="PS00301">
    <property type="entry name" value="G_TR_1"/>
    <property type="match status" value="1"/>
</dbReference>
<dbReference type="PROSITE" id="PS51722">
    <property type="entry name" value="G_TR_2"/>
    <property type="match status" value="1"/>
</dbReference>
<proteinExistence type="inferred from homology"/>